<keyword id="KW-0678">Repressor</keyword>
<keyword id="KW-0687">Ribonucleoprotein</keyword>
<keyword id="KW-0689">Ribosomal protein</keyword>
<keyword id="KW-0694">RNA-binding</keyword>
<keyword id="KW-0699">rRNA-binding</keyword>
<keyword id="KW-0810">Translation regulation</keyword>
<keyword id="KW-0820">tRNA-binding</keyword>
<reference key="1">
    <citation type="journal article" date="2007" name="PLoS Genet.">
        <title>Meningococcal genetic variation mechanisms viewed through comparative analysis of serogroup C strain FAM18.</title>
        <authorList>
            <person name="Bentley S.D."/>
            <person name="Vernikos G.S."/>
            <person name="Snyder L.A.S."/>
            <person name="Churcher C."/>
            <person name="Arrowsmith C."/>
            <person name="Chillingworth T."/>
            <person name="Cronin A."/>
            <person name="Davis P.H."/>
            <person name="Holroyd N.E."/>
            <person name="Jagels K."/>
            <person name="Maddison M."/>
            <person name="Moule S."/>
            <person name="Rabbinowitsch E."/>
            <person name="Sharp S."/>
            <person name="Unwin L."/>
            <person name="Whitehead S."/>
            <person name="Quail M.A."/>
            <person name="Achtman M."/>
            <person name="Barrell B.G."/>
            <person name="Saunders N.J."/>
            <person name="Parkhill J."/>
        </authorList>
    </citation>
    <scope>NUCLEOTIDE SEQUENCE [LARGE SCALE GENOMIC DNA]</scope>
    <source>
        <strain>ATCC 700532 / DSM 15464 / FAM18</strain>
    </source>
</reference>
<name>RL1_NEIMF</name>
<evidence type="ECO:0000255" key="1">
    <source>
        <dbReference type="HAMAP-Rule" id="MF_01318"/>
    </source>
</evidence>
<evidence type="ECO:0000305" key="2"/>
<dbReference type="EMBL" id="AM421808">
    <property type="protein sequence ID" value="CAM09439.1"/>
    <property type="molecule type" value="Genomic_DNA"/>
</dbReference>
<dbReference type="RefSeq" id="WP_002218415.1">
    <property type="nucleotide sequence ID" value="NC_008767.1"/>
</dbReference>
<dbReference type="SMR" id="A1KRG3"/>
<dbReference type="GeneID" id="93387204"/>
<dbReference type="KEGG" id="nmc:NMC0120"/>
<dbReference type="HOGENOM" id="CLU_062853_0_0_4"/>
<dbReference type="Proteomes" id="UP000002286">
    <property type="component" value="Chromosome"/>
</dbReference>
<dbReference type="GO" id="GO:0022625">
    <property type="term" value="C:cytosolic large ribosomal subunit"/>
    <property type="evidence" value="ECO:0007669"/>
    <property type="project" value="TreeGrafter"/>
</dbReference>
<dbReference type="GO" id="GO:0019843">
    <property type="term" value="F:rRNA binding"/>
    <property type="evidence" value="ECO:0007669"/>
    <property type="project" value="UniProtKB-UniRule"/>
</dbReference>
<dbReference type="GO" id="GO:0003735">
    <property type="term" value="F:structural constituent of ribosome"/>
    <property type="evidence" value="ECO:0007669"/>
    <property type="project" value="InterPro"/>
</dbReference>
<dbReference type="GO" id="GO:0000049">
    <property type="term" value="F:tRNA binding"/>
    <property type="evidence" value="ECO:0007669"/>
    <property type="project" value="UniProtKB-KW"/>
</dbReference>
<dbReference type="GO" id="GO:0006417">
    <property type="term" value="P:regulation of translation"/>
    <property type="evidence" value="ECO:0007669"/>
    <property type="project" value="UniProtKB-KW"/>
</dbReference>
<dbReference type="GO" id="GO:0006412">
    <property type="term" value="P:translation"/>
    <property type="evidence" value="ECO:0007669"/>
    <property type="project" value="UniProtKB-UniRule"/>
</dbReference>
<dbReference type="CDD" id="cd00403">
    <property type="entry name" value="Ribosomal_L1"/>
    <property type="match status" value="1"/>
</dbReference>
<dbReference type="FunFam" id="3.40.50.790:FF:000001">
    <property type="entry name" value="50S ribosomal protein L1"/>
    <property type="match status" value="1"/>
</dbReference>
<dbReference type="Gene3D" id="3.30.190.20">
    <property type="match status" value="1"/>
</dbReference>
<dbReference type="Gene3D" id="3.40.50.790">
    <property type="match status" value="1"/>
</dbReference>
<dbReference type="HAMAP" id="MF_01318_B">
    <property type="entry name" value="Ribosomal_uL1_B"/>
    <property type="match status" value="1"/>
</dbReference>
<dbReference type="InterPro" id="IPR005878">
    <property type="entry name" value="Ribosom_uL1_bac-type"/>
</dbReference>
<dbReference type="InterPro" id="IPR002143">
    <property type="entry name" value="Ribosomal_uL1"/>
</dbReference>
<dbReference type="InterPro" id="IPR023674">
    <property type="entry name" value="Ribosomal_uL1-like"/>
</dbReference>
<dbReference type="InterPro" id="IPR028364">
    <property type="entry name" value="Ribosomal_uL1/biogenesis"/>
</dbReference>
<dbReference type="InterPro" id="IPR016095">
    <property type="entry name" value="Ribosomal_uL1_3-a/b-sand"/>
</dbReference>
<dbReference type="InterPro" id="IPR023673">
    <property type="entry name" value="Ribosomal_uL1_CS"/>
</dbReference>
<dbReference type="NCBIfam" id="TIGR01169">
    <property type="entry name" value="rplA_bact"/>
    <property type="match status" value="1"/>
</dbReference>
<dbReference type="PANTHER" id="PTHR36427">
    <property type="entry name" value="54S RIBOSOMAL PROTEIN L1, MITOCHONDRIAL"/>
    <property type="match status" value="1"/>
</dbReference>
<dbReference type="PANTHER" id="PTHR36427:SF3">
    <property type="entry name" value="LARGE RIBOSOMAL SUBUNIT PROTEIN UL1M"/>
    <property type="match status" value="1"/>
</dbReference>
<dbReference type="Pfam" id="PF00687">
    <property type="entry name" value="Ribosomal_L1"/>
    <property type="match status" value="1"/>
</dbReference>
<dbReference type="PIRSF" id="PIRSF002155">
    <property type="entry name" value="Ribosomal_L1"/>
    <property type="match status" value="1"/>
</dbReference>
<dbReference type="SUPFAM" id="SSF56808">
    <property type="entry name" value="Ribosomal protein L1"/>
    <property type="match status" value="1"/>
</dbReference>
<dbReference type="PROSITE" id="PS01199">
    <property type="entry name" value="RIBOSOMAL_L1"/>
    <property type="match status" value="1"/>
</dbReference>
<feature type="chain" id="PRO_0000308059" description="Large ribosomal subunit protein uL1">
    <location>
        <begin position="1"/>
        <end position="231"/>
    </location>
</feature>
<organism>
    <name type="scientific">Neisseria meningitidis serogroup C / serotype 2a (strain ATCC 700532 / DSM 15464 / FAM18)</name>
    <dbReference type="NCBI Taxonomy" id="272831"/>
    <lineage>
        <taxon>Bacteria</taxon>
        <taxon>Pseudomonadati</taxon>
        <taxon>Pseudomonadota</taxon>
        <taxon>Betaproteobacteria</taxon>
        <taxon>Neisseriales</taxon>
        <taxon>Neisseriaceae</taxon>
        <taxon>Neisseria</taxon>
    </lineage>
</organism>
<proteinExistence type="inferred from homology"/>
<gene>
    <name evidence="1" type="primary">rplA</name>
    <name type="ordered locus">NMC0120</name>
</gene>
<accession>A1KRG3</accession>
<protein>
    <recommendedName>
        <fullName evidence="1">Large ribosomal subunit protein uL1</fullName>
    </recommendedName>
    <alternativeName>
        <fullName evidence="2">50S ribosomal protein L1</fullName>
    </alternativeName>
</protein>
<sequence>MAKVSKRLKALRSSVEANKLYAIDEAIALVKKAATAKFDESVDVSFNLGVDPRKSDQVIRGSVVLPKGTGKITRVAVFTQGANAEAAKEAGADIVGFEDLAAEIKAGNLNFDVVIASPDAMRIVGQLGTILGPRGLMPNPKVGTVTPNVAEAVKNAKAGQVQYRTDKAGIVHATIGRASFAEADLKENFDALLDAIVKAKPAAAKGQYLKKVAVSSTMGLGIRVDTSSVNN</sequence>
<comment type="function">
    <text evidence="1">Binds directly to 23S rRNA. The L1 stalk is quite mobile in the ribosome, and is involved in E site tRNA release.</text>
</comment>
<comment type="function">
    <text evidence="1">Protein L1 is also a translational repressor protein, it controls the translation of the L11 operon by binding to its mRNA.</text>
</comment>
<comment type="subunit">
    <text evidence="1">Part of the 50S ribosomal subunit.</text>
</comment>
<comment type="similarity">
    <text evidence="1">Belongs to the universal ribosomal protein uL1 family.</text>
</comment>